<gene>
    <name evidence="1" type="primary">frr</name>
    <name type="ordered locus">IL0842</name>
</gene>
<organism>
    <name type="scientific">Idiomarina loihiensis (strain ATCC BAA-735 / DSM 15497 / L2-TR)</name>
    <dbReference type="NCBI Taxonomy" id="283942"/>
    <lineage>
        <taxon>Bacteria</taxon>
        <taxon>Pseudomonadati</taxon>
        <taxon>Pseudomonadota</taxon>
        <taxon>Gammaproteobacteria</taxon>
        <taxon>Alteromonadales</taxon>
        <taxon>Idiomarinaceae</taxon>
        <taxon>Idiomarina</taxon>
    </lineage>
</organism>
<sequence>MIKETIEDAKDRMEKSVESLRSQMSKVRTGRAHPSILDSVMVNYYGTDTPLKQLANITTEDSRTLALTVFDKSASAAVEKAIINSDLGLNPASAGAVIRIPLPPLTEERRRDLVKIVRAEAENGRIAVRNIRRDANGDIKDLLKEKEITEDEERNAEEEIQKLTDKFVKQIDEALKAKEADLMEI</sequence>
<proteinExistence type="inferred from homology"/>
<evidence type="ECO:0000255" key="1">
    <source>
        <dbReference type="HAMAP-Rule" id="MF_00040"/>
    </source>
</evidence>
<protein>
    <recommendedName>
        <fullName evidence="1">Ribosome-recycling factor</fullName>
        <shortName evidence="1">RRF</shortName>
    </recommendedName>
    <alternativeName>
        <fullName evidence="1">Ribosome-releasing factor</fullName>
    </alternativeName>
</protein>
<feature type="chain" id="PRO_0000167473" description="Ribosome-recycling factor">
    <location>
        <begin position="1"/>
        <end position="185"/>
    </location>
</feature>
<reference key="1">
    <citation type="journal article" date="2004" name="Proc. Natl. Acad. Sci. U.S.A.">
        <title>Genome sequence of the deep-sea gamma-proteobacterium Idiomarina loihiensis reveals amino acid fermentation as a source of carbon and energy.</title>
        <authorList>
            <person name="Hou S."/>
            <person name="Saw J.H."/>
            <person name="Lee K.S."/>
            <person name="Freitas T.A."/>
            <person name="Belisle C."/>
            <person name="Kawarabayasi Y."/>
            <person name="Donachie S.P."/>
            <person name="Pikina A."/>
            <person name="Galperin M.Y."/>
            <person name="Koonin E.V."/>
            <person name="Makarova K.S."/>
            <person name="Omelchenko M.V."/>
            <person name="Sorokin A."/>
            <person name="Wolf Y.I."/>
            <person name="Li Q.X."/>
            <person name="Keum Y.S."/>
            <person name="Campbell S."/>
            <person name="Denery J."/>
            <person name="Aizawa S."/>
            <person name="Shibata S."/>
            <person name="Malahoff A."/>
            <person name="Alam M."/>
        </authorList>
    </citation>
    <scope>NUCLEOTIDE SEQUENCE [LARGE SCALE GENOMIC DNA]</scope>
    <source>
        <strain>ATCC BAA-735 / DSM 15497 / L2-TR</strain>
    </source>
</reference>
<dbReference type="EMBL" id="AE017340">
    <property type="protein sequence ID" value="AAV81682.1"/>
    <property type="molecule type" value="Genomic_DNA"/>
</dbReference>
<dbReference type="RefSeq" id="WP_011234093.1">
    <property type="nucleotide sequence ID" value="NC_006512.1"/>
</dbReference>
<dbReference type="SMR" id="Q5QXS3"/>
<dbReference type="STRING" id="283942.IL0842"/>
<dbReference type="GeneID" id="41335998"/>
<dbReference type="KEGG" id="ilo:IL0842"/>
<dbReference type="eggNOG" id="COG0233">
    <property type="taxonomic scope" value="Bacteria"/>
</dbReference>
<dbReference type="HOGENOM" id="CLU_073981_2_0_6"/>
<dbReference type="OrthoDB" id="9804006at2"/>
<dbReference type="Proteomes" id="UP000001171">
    <property type="component" value="Chromosome"/>
</dbReference>
<dbReference type="GO" id="GO:0005829">
    <property type="term" value="C:cytosol"/>
    <property type="evidence" value="ECO:0007669"/>
    <property type="project" value="GOC"/>
</dbReference>
<dbReference type="GO" id="GO:0043023">
    <property type="term" value="F:ribosomal large subunit binding"/>
    <property type="evidence" value="ECO:0007669"/>
    <property type="project" value="TreeGrafter"/>
</dbReference>
<dbReference type="GO" id="GO:0002184">
    <property type="term" value="P:cytoplasmic translational termination"/>
    <property type="evidence" value="ECO:0007669"/>
    <property type="project" value="TreeGrafter"/>
</dbReference>
<dbReference type="CDD" id="cd00520">
    <property type="entry name" value="RRF"/>
    <property type="match status" value="1"/>
</dbReference>
<dbReference type="FunFam" id="1.10.132.20:FF:000001">
    <property type="entry name" value="Ribosome-recycling factor"/>
    <property type="match status" value="1"/>
</dbReference>
<dbReference type="FunFam" id="3.30.1360.40:FF:000001">
    <property type="entry name" value="Ribosome-recycling factor"/>
    <property type="match status" value="1"/>
</dbReference>
<dbReference type="Gene3D" id="3.30.1360.40">
    <property type="match status" value="1"/>
</dbReference>
<dbReference type="Gene3D" id="1.10.132.20">
    <property type="entry name" value="Ribosome-recycling factor"/>
    <property type="match status" value="1"/>
</dbReference>
<dbReference type="HAMAP" id="MF_00040">
    <property type="entry name" value="RRF"/>
    <property type="match status" value="1"/>
</dbReference>
<dbReference type="InterPro" id="IPR002661">
    <property type="entry name" value="Ribosome_recyc_fac"/>
</dbReference>
<dbReference type="InterPro" id="IPR023584">
    <property type="entry name" value="Ribosome_recyc_fac_dom"/>
</dbReference>
<dbReference type="InterPro" id="IPR036191">
    <property type="entry name" value="RRF_sf"/>
</dbReference>
<dbReference type="NCBIfam" id="TIGR00496">
    <property type="entry name" value="frr"/>
    <property type="match status" value="1"/>
</dbReference>
<dbReference type="PANTHER" id="PTHR20982:SF3">
    <property type="entry name" value="MITOCHONDRIAL RIBOSOME RECYCLING FACTOR PSEUDO 1"/>
    <property type="match status" value="1"/>
</dbReference>
<dbReference type="PANTHER" id="PTHR20982">
    <property type="entry name" value="RIBOSOME RECYCLING FACTOR"/>
    <property type="match status" value="1"/>
</dbReference>
<dbReference type="Pfam" id="PF01765">
    <property type="entry name" value="RRF"/>
    <property type="match status" value="1"/>
</dbReference>
<dbReference type="SUPFAM" id="SSF55194">
    <property type="entry name" value="Ribosome recycling factor, RRF"/>
    <property type="match status" value="1"/>
</dbReference>
<accession>Q5QXS3</accession>
<comment type="function">
    <text evidence="1">Responsible for the release of ribosomes from messenger RNA at the termination of protein biosynthesis. May increase the efficiency of translation by recycling ribosomes from one round of translation to another.</text>
</comment>
<comment type="subcellular location">
    <subcellularLocation>
        <location evidence="1">Cytoplasm</location>
    </subcellularLocation>
</comment>
<comment type="similarity">
    <text evidence="1">Belongs to the RRF family.</text>
</comment>
<keyword id="KW-0963">Cytoplasm</keyword>
<keyword id="KW-0648">Protein biosynthesis</keyword>
<keyword id="KW-1185">Reference proteome</keyword>
<name>RRF_IDILO</name>